<name>RAB14_CHICK</name>
<evidence type="ECO:0000250" key="1"/>
<evidence type="ECO:0000250" key="2">
    <source>
        <dbReference type="UniProtKB" id="P61106"/>
    </source>
</evidence>
<evidence type="ECO:0000250" key="3">
    <source>
        <dbReference type="UniProtKB" id="P61107"/>
    </source>
</evidence>
<evidence type="ECO:0000250" key="4">
    <source>
        <dbReference type="UniProtKB" id="Q91V41"/>
    </source>
</evidence>
<evidence type="ECO:0000256" key="5">
    <source>
        <dbReference type="SAM" id="MobiDB-lite"/>
    </source>
</evidence>
<evidence type="ECO:0000305" key="6"/>
<sequence length="215" mass="23897">MATAPYNYSYIFKYIIIGDMGVGKSCLLHQFTEKKFMADCPHTIGVEFGTRIIEVSGQKIKLQIWDTAGQERFRAVTRSYYRGAAGALMVYDITRRSTYNHLSSWLTDARNLTNPNTVIILIGNKADLEAQRDVTYEEAKQFAEENGLLFLEASAKTGENVEDAFLEAAKKIYQNIQDGSLDLNAAESGVQHKPSAPQGGRLTSEPQPQREGCGC</sequence>
<gene>
    <name type="primary">RAB14</name>
    <name type="ORF">RCJMB04_9b24</name>
</gene>
<comment type="function">
    <text evidence="2 3 4">The small GTPases Rab are key regulators of intracellular membrane trafficking, from the formation of transport vesicles to their fusion with membranes. Rabs cycle between an inactive GDP-bound form and an active GTP-bound form that is able to recruit to membranes different set of downstream effectors directly responsible for vesicle formation, movement, tethering and fusion (By similarity). Involved in membrane trafficking between the Golgi complex and endosomes during early embryonic development (By similarity). Regulates the Golgi to endosome transport of FGFR-containing vesicles during early development, a key process for developing basement membrane and epiblast and primitive endoderm lineages during early postimplantation development. May act by modulating the kinesin KIF16B-cargo association to endosomes (By similarity). Regulates, together with its guanine nucleotide exchange factor DENND6A, the specific endocytic transport of ADAM10, N-cadherin/CDH2 shedding and cell-cell adhesion. Mediates endosomal tethering and fusion through the interaction with RUFY1 and RAB4B (By similarity). Interaction with RAB11FIP1 may function in the process of neurite formation (By similarity).</text>
</comment>
<comment type="catalytic activity">
    <reaction evidence="2">
        <text>GTP + H2O = GDP + phosphate + H(+)</text>
        <dbReference type="Rhea" id="RHEA:19669"/>
        <dbReference type="ChEBI" id="CHEBI:15377"/>
        <dbReference type="ChEBI" id="CHEBI:15378"/>
        <dbReference type="ChEBI" id="CHEBI:37565"/>
        <dbReference type="ChEBI" id="CHEBI:43474"/>
        <dbReference type="ChEBI" id="CHEBI:58189"/>
        <dbReference type="EC" id="3.6.5.2"/>
    </reaction>
    <physiologicalReaction direction="left-to-right" evidence="2">
        <dbReference type="Rhea" id="RHEA:19670"/>
    </physiologicalReaction>
</comment>
<comment type="cofactor">
    <cofactor evidence="2">
        <name>Mg(2+)</name>
        <dbReference type="ChEBI" id="CHEBI:18420"/>
    </cofactor>
</comment>
<comment type="activity regulation">
    <text evidence="2">Regulated by guanine nucleotide exchange factors (GEFs) including DENND6A and DENND6B which promote the exchange of bound GDP for free GTP. Regulated by GTPase activating proteins (GAPs) which increase the GTP hydrolysis activity. Inhibited by GDP dissociation inhibitors (GDIs) which prevent Rab-GDP dissociation.</text>
</comment>
<comment type="subcellular location">
    <subcellularLocation>
        <location evidence="2">Recycling endosome</location>
    </subcellularLocation>
    <subcellularLocation>
        <location evidence="2">Early endosome membrane</location>
        <topology evidence="2">Lipid-anchor</topology>
        <orientation evidence="2">Cytoplasmic side</orientation>
    </subcellularLocation>
    <subcellularLocation>
        <location evidence="2">Golgi apparatus membrane</location>
        <topology evidence="2">Lipid-anchor</topology>
        <orientation evidence="2">Cytoplasmic side</orientation>
    </subcellularLocation>
    <subcellularLocation>
        <location evidence="2">Golgi apparatus</location>
        <location evidence="2">trans-Golgi network membrane</location>
        <topology evidence="2">Lipid-anchor</topology>
        <orientation evidence="2">Cytoplasmic side</orientation>
    </subcellularLocation>
    <subcellularLocation>
        <location evidence="2">Cytoplasmic vesicle</location>
        <location evidence="2">Phagosome</location>
    </subcellularLocation>
    <text evidence="2">Recruited to recycling endosomes by DENND6A.</text>
</comment>
<comment type="domain">
    <text evidence="2">Switch 1, switch 2 and the interswitch regions are characteristic of Rab GTPases and mediate the interactions with Rab downstream effectors. The switch regions undergo conformational changes upon nucleotide binding which drives interaction with specific sets of effector proteins, with most effectors only binding to GTP-bound Rab.</text>
</comment>
<comment type="similarity">
    <text evidence="6">Belongs to the small GTPase superfamily. Rab family.</text>
</comment>
<keyword id="KW-0007">Acetylation</keyword>
<keyword id="KW-0968">Cytoplasmic vesicle</keyword>
<keyword id="KW-0967">Endosome</keyword>
<keyword id="KW-0333">Golgi apparatus</keyword>
<keyword id="KW-0342">GTP-binding</keyword>
<keyword id="KW-0378">Hydrolase</keyword>
<keyword id="KW-0449">Lipoprotein</keyword>
<keyword id="KW-0460">Magnesium</keyword>
<keyword id="KW-0472">Membrane</keyword>
<keyword id="KW-0479">Metal-binding</keyword>
<keyword id="KW-0488">Methylation</keyword>
<keyword id="KW-0547">Nucleotide-binding</keyword>
<keyword id="KW-0636">Prenylation</keyword>
<keyword id="KW-0653">Protein transport</keyword>
<keyword id="KW-1185">Reference proteome</keyword>
<keyword id="KW-0813">Transport</keyword>
<reference key="1">
    <citation type="journal article" date="2005" name="Genome Biol.">
        <title>Full-length cDNAs from chicken bursal lymphocytes to facilitate gene function analysis.</title>
        <authorList>
            <person name="Caldwell R.B."/>
            <person name="Kierzek A.M."/>
            <person name="Arakawa H."/>
            <person name="Bezzubov Y."/>
            <person name="Zaim J."/>
            <person name="Fiedler P."/>
            <person name="Kutter S."/>
            <person name="Blagodatski A."/>
            <person name="Kostovska D."/>
            <person name="Koter M."/>
            <person name="Plachy J."/>
            <person name="Carninci P."/>
            <person name="Hayashizaki Y."/>
            <person name="Buerstedde J.-M."/>
        </authorList>
    </citation>
    <scope>NUCLEOTIDE SEQUENCE [LARGE SCALE MRNA]</scope>
    <source>
        <strain>CB</strain>
        <tissue>Bursa of Fabricius</tissue>
    </source>
</reference>
<protein>
    <recommendedName>
        <fullName>Ras-related protein Rab-14</fullName>
        <ecNumber evidence="2">3.6.5.2</ecNumber>
    </recommendedName>
</protein>
<proteinExistence type="evidence at transcript level"/>
<dbReference type="EC" id="3.6.5.2" evidence="2"/>
<dbReference type="EMBL" id="AJ719989">
    <property type="protein sequence ID" value="CAG31648.1"/>
    <property type="molecule type" value="mRNA"/>
</dbReference>
<dbReference type="RefSeq" id="NP_001012814.1">
    <property type="nucleotide sequence ID" value="NM_001012796.2"/>
</dbReference>
<dbReference type="SMR" id="Q5ZKU5"/>
<dbReference type="FunCoup" id="Q5ZKU5">
    <property type="interactions" value="2512"/>
</dbReference>
<dbReference type="STRING" id="9031.ENSGALP00000002234"/>
<dbReference type="GlyGen" id="Q5ZKU5">
    <property type="glycosylation" value="1 site"/>
</dbReference>
<dbReference type="PaxDb" id="9031-ENSGALP00000002234"/>
<dbReference type="GeneID" id="417119"/>
<dbReference type="KEGG" id="gga:417119"/>
<dbReference type="CTD" id="51552"/>
<dbReference type="VEuPathDB" id="HostDB:geneid_417119"/>
<dbReference type="eggNOG" id="KOG0097">
    <property type="taxonomic scope" value="Eukaryota"/>
</dbReference>
<dbReference type="HOGENOM" id="CLU_041217_23_1_1"/>
<dbReference type="InParanoid" id="Q5ZKU5"/>
<dbReference type="OMA" id="ANGVMQY"/>
<dbReference type="OrthoDB" id="9989112at2759"/>
<dbReference type="PhylomeDB" id="Q5ZKU5"/>
<dbReference type="TreeFam" id="TF300032"/>
<dbReference type="Reactome" id="R-GGA-1660499">
    <property type="pathway name" value="Synthesis of PIPs at the plasma membrane"/>
</dbReference>
<dbReference type="Reactome" id="R-GGA-6798695">
    <property type="pathway name" value="Neutrophil degranulation"/>
</dbReference>
<dbReference type="Reactome" id="R-GGA-8876198">
    <property type="pathway name" value="RAB GEFs exchange GTP for GDP on RABs"/>
</dbReference>
<dbReference type="PRO" id="PR:Q5ZKU5"/>
<dbReference type="Proteomes" id="UP000000539">
    <property type="component" value="Chromosome 17"/>
</dbReference>
<dbReference type="Bgee" id="ENSGALG00000001474">
    <property type="expression patterns" value="Expressed in cerebellum and 13 other cell types or tissues"/>
</dbReference>
<dbReference type="GO" id="GO:0005829">
    <property type="term" value="C:cytosol"/>
    <property type="evidence" value="ECO:0007669"/>
    <property type="project" value="GOC"/>
</dbReference>
<dbReference type="GO" id="GO:0005769">
    <property type="term" value="C:early endosome"/>
    <property type="evidence" value="ECO:0000318"/>
    <property type="project" value="GO_Central"/>
</dbReference>
<dbReference type="GO" id="GO:0031901">
    <property type="term" value="C:early endosome membrane"/>
    <property type="evidence" value="ECO:0007669"/>
    <property type="project" value="UniProtKB-SubCell"/>
</dbReference>
<dbReference type="GO" id="GO:0012505">
    <property type="term" value="C:endomembrane system"/>
    <property type="evidence" value="ECO:0000318"/>
    <property type="project" value="GO_Central"/>
</dbReference>
<dbReference type="GO" id="GO:0000139">
    <property type="term" value="C:Golgi membrane"/>
    <property type="evidence" value="ECO:0007669"/>
    <property type="project" value="UniProtKB-SubCell"/>
</dbReference>
<dbReference type="GO" id="GO:0045335">
    <property type="term" value="C:phagocytic vesicle"/>
    <property type="evidence" value="ECO:0000318"/>
    <property type="project" value="GO_Central"/>
</dbReference>
<dbReference type="GO" id="GO:0055037">
    <property type="term" value="C:recycling endosome"/>
    <property type="evidence" value="ECO:0007669"/>
    <property type="project" value="UniProtKB-SubCell"/>
</dbReference>
<dbReference type="GO" id="GO:0005802">
    <property type="term" value="C:trans-Golgi network"/>
    <property type="evidence" value="ECO:0007669"/>
    <property type="project" value="InterPro"/>
</dbReference>
<dbReference type="GO" id="GO:0003925">
    <property type="term" value="F:G protein activity"/>
    <property type="evidence" value="ECO:0000250"/>
    <property type="project" value="UniProtKB"/>
</dbReference>
<dbReference type="GO" id="GO:0005525">
    <property type="term" value="F:GTP binding"/>
    <property type="evidence" value="ECO:0007669"/>
    <property type="project" value="UniProtKB-KW"/>
</dbReference>
<dbReference type="GO" id="GO:0003924">
    <property type="term" value="F:GTPase activity"/>
    <property type="evidence" value="ECO:0000318"/>
    <property type="project" value="GO_Central"/>
</dbReference>
<dbReference type="GO" id="GO:0042742">
    <property type="term" value="P:defense response to bacterium"/>
    <property type="evidence" value="ECO:0007669"/>
    <property type="project" value="InterPro"/>
</dbReference>
<dbReference type="GO" id="GO:0032456">
    <property type="term" value="P:endocytic recycling"/>
    <property type="evidence" value="ECO:0007669"/>
    <property type="project" value="InterPro"/>
</dbReference>
<dbReference type="GO" id="GO:0008543">
    <property type="term" value="P:fibroblast growth factor receptor signaling pathway"/>
    <property type="evidence" value="ECO:0000250"/>
    <property type="project" value="UniProtKB"/>
</dbReference>
<dbReference type="GO" id="GO:0006895">
    <property type="term" value="P:Golgi to endosome transport"/>
    <property type="evidence" value="ECO:0000250"/>
    <property type="project" value="UniProtKB"/>
</dbReference>
<dbReference type="GO" id="GO:0006886">
    <property type="term" value="P:intracellular protein transport"/>
    <property type="evidence" value="ECO:0000318"/>
    <property type="project" value="GO_Central"/>
</dbReference>
<dbReference type="GO" id="GO:0001845">
    <property type="term" value="P:phagolysosome assembly"/>
    <property type="evidence" value="ECO:0000318"/>
    <property type="project" value="GO_Central"/>
</dbReference>
<dbReference type="GO" id="GO:0045995">
    <property type="term" value="P:regulation of embryonic development"/>
    <property type="evidence" value="ECO:0000250"/>
    <property type="project" value="UniProtKB"/>
</dbReference>
<dbReference type="CDD" id="cd04122">
    <property type="entry name" value="Rab14"/>
    <property type="match status" value="1"/>
</dbReference>
<dbReference type="FunFam" id="3.40.50.300:FF:000344">
    <property type="entry name" value="Ras-related protein Rab-14"/>
    <property type="match status" value="1"/>
</dbReference>
<dbReference type="Gene3D" id="3.40.50.300">
    <property type="entry name" value="P-loop containing nucleotide triphosphate hydrolases"/>
    <property type="match status" value="1"/>
</dbReference>
<dbReference type="InterPro" id="IPR027417">
    <property type="entry name" value="P-loop_NTPase"/>
</dbReference>
<dbReference type="InterPro" id="IPR030702">
    <property type="entry name" value="Rab14"/>
</dbReference>
<dbReference type="InterPro" id="IPR050209">
    <property type="entry name" value="Rab_GTPases_membrane_traffic"/>
</dbReference>
<dbReference type="InterPro" id="IPR005225">
    <property type="entry name" value="Small_GTP-bd"/>
</dbReference>
<dbReference type="InterPro" id="IPR001806">
    <property type="entry name" value="Small_GTPase"/>
</dbReference>
<dbReference type="NCBIfam" id="TIGR00231">
    <property type="entry name" value="small_GTP"/>
    <property type="match status" value="1"/>
</dbReference>
<dbReference type="PANTHER" id="PTHR47979">
    <property type="entry name" value="DRAB11-RELATED"/>
    <property type="match status" value="1"/>
</dbReference>
<dbReference type="Pfam" id="PF00071">
    <property type="entry name" value="Ras"/>
    <property type="match status" value="1"/>
</dbReference>
<dbReference type="PRINTS" id="PR00449">
    <property type="entry name" value="RASTRNSFRMNG"/>
</dbReference>
<dbReference type="SMART" id="SM00175">
    <property type="entry name" value="RAB"/>
    <property type="match status" value="1"/>
</dbReference>
<dbReference type="SMART" id="SM00176">
    <property type="entry name" value="RAN"/>
    <property type="match status" value="1"/>
</dbReference>
<dbReference type="SMART" id="SM00173">
    <property type="entry name" value="RAS"/>
    <property type="match status" value="1"/>
</dbReference>
<dbReference type="SMART" id="SM00174">
    <property type="entry name" value="RHO"/>
    <property type="match status" value="1"/>
</dbReference>
<dbReference type="SUPFAM" id="SSF52540">
    <property type="entry name" value="P-loop containing nucleoside triphosphate hydrolases"/>
    <property type="match status" value="1"/>
</dbReference>
<dbReference type="PROSITE" id="PS51419">
    <property type="entry name" value="RAB"/>
    <property type="match status" value="1"/>
</dbReference>
<organism>
    <name type="scientific">Gallus gallus</name>
    <name type="common">Chicken</name>
    <dbReference type="NCBI Taxonomy" id="9031"/>
    <lineage>
        <taxon>Eukaryota</taxon>
        <taxon>Metazoa</taxon>
        <taxon>Chordata</taxon>
        <taxon>Craniata</taxon>
        <taxon>Vertebrata</taxon>
        <taxon>Euteleostomi</taxon>
        <taxon>Archelosauria</taxon>
        <taxon>Archosauria</taxon>
        <taxon>Dinosauria</taxon>
        <taxon>Saurischia</taxon>
        <taxon>Theropoda</taxon>
        <taxon>Coelurosauria</taxon>
        <taxon>Aves</taxon>
        <taxon>Neognathae</taxon>
        <taxon>Galloanserae</taxon>
        <taxon>Galliformes</taxon>
        <taxon>Phasianidae</taxon>
        <taxon>Phasianinae</taxon>
        <taxon>Gallus</taxon>
    </lineage>
</organism>
<feature type="initiator methionine" description="Removed" evidence="1">
    <location>
        <position position="1"/>
    </location>
</feature>
<feature type="chain" id="PRO_0000260529" description="Ras-related protein Rab-14">
    <location>
        <begin position="2"/>
        <end position="215"/>
    </location>
</feature>
<feature type="region of interest" description="Disordered" evidence="5">
    <location>
        <begin position="188"/>
        <end position="215"/>
    </location>
</feature>
<feature type="short sequence motif" description="Switch 1" evidence="2">
    <location>
        <begin position="42"/>
        <end position="47"/>
    </location>
</feature>
<feature type="short sequence motif" description="Switch 2" evidence="2">
    <location>
        <begin position="68"/>
        <end position="77"/>
    </location>
</feature>
<feature type="binding site" evidence="2">
    <location>
        <position position="21"/>
    </location>
    <ligand>
        <name>GTP</name>
        <dbReference type="ChEBI" id="CHEBI:37565"/>
    </ligand>
</feature>
<feature type="binding site" evidence="2">
    <location>
        <position position="22"/>
    </location>
    <ligand>
        <name>GTP</name>
        <dbReference type="ChEBI" id="CHEBI:37565"/>
    </ligand>
</feature>
<feature type="binding site" evidence="2">
    <location>
        <position position="23"/>
    </location>
    <ligand>
        <name>GTP</name>
        <dbReference type="ChEBI" id="CHEBI:37565"/>
    </ligand>
</feature>
<feature type="binding site" evidence="2">
    <location>
        <position position="24"/>
    </location>
    <ligand>
        <name>GTP</name>
        <dbReference type="ChEBI" id="CHEBI:37565"/>
    </ligand>
</feature>
<feature type="binding site" evidence="2">
    <location>
        <position position="25"/>
    </location>
    <ligand>
        <name>GTP</name>
        <dbReference type="ChEBI" id="CHEBI:37565"/>
    </ligand>
</feature>
<feature type="binding site" evidence="2">
    <location>
        <position position="25"/>
    </location>
    <ligand>
        <name>Mg(2+)</name>
        <dbReference type="ChEBI" id="CHEBI:18420"/>
    </ligand>
</feature>
<feature type="binding site" evidence="2">
    <location>
        <position position="26"/>
    </location>
    <ligand>
        <name>GTP</name>
        <dbReference type="ChEBI" id="CHEBI:37565"/>
    </ligand>
</feature>
<feature type="binding site" evidence="2">
    <location>
        <position position="38"/>
    </location>
    <ligand>
        <name>GTP</name>
        <dbReference type="ChEBI" id="CHEBI:37565"/>
    </ligand>
</feature>
<feature type="binding site" evidence="2">
    <location>
        <position position="39"/>
    </location>
    <ligand>
        <name>GTP</name>
        <dbReference type="ChEBI" id="CHEBI:37565"/>
    </ligand>
</feature>
<feature type="binding site" evidence="2">
    <location>
        <position position="40"/>
    </location>
    <ligand>
        <name>GTP</name>
        <dbReference type="ChEBI" id="CHEBI:37565"/>
    </ligand>
</feature>
<feature type="binding site" evidence="2">
    <location>
        <position position="42"/>
    </location>
    <ligand>
        <name>GTP</name>
        <dbReference type="ChEBI" id="CHEBI:37565"/>
    </ligand>
</feature>
<feature type="binding site" evidence="2">
    <location>
        <position position="43"/>
    </location>
    <ligand>
        <name>GTP</name>
        <dbReference type="ChEBI" id="CHEBI:37565"/>
    </ligand>
</feature>
<feature type="binding site" evidence="2">
    <location>
        <position position="43"/>
    </location>
    <ligand>
        <name>Mg(2+)</name>
        <dbReference type="ChEBI" id="CHEBI:18420"/>
    </ligand>
</feature>
<feature type="binding site" evidence="2">
    <location>
        <position position="66"/>
    </location>
    <ligand>
        <name>Mg(2+)</name>
        <dbReference type="ChEBI" id="CHEBI:18420"/>
    </ligand>
</feature>
<feature type="binding site" evidence="2">
    <location>
        <position position="69"/>
    </location>
    <ligand>
        <name>GTP</name>
        <dbReference type="ChEBI" id="CHEBI:37565"/>
    </ligand>
</feature>
<feature type="binding site" evidence="2">
    <location>
        <position position="124"/>
    </location>
    <ligand>
        <name>GTP</name>
        <dbReference type="ChEBI" id="CHEBI:37565"/>
    </ligand>
</feature>
<feature type="binding site" evidence="2">
    <location>
        <position position="125"/>
    </location>
    <ligand>
        <name>GTP</name>
        <dbReference type="ChEBI" id="CHEBI:37565"/>
    </ligand>
</feature>
<feature type="binding site" evidence="2">
    <location>
        <position position="127"/>
    </location>
    <ligand>
        <name>GTP</name>
        <dbReference type="ChEBI" id="CHEBI:37565"/>
    </ligand>
</feature>
<feature type="binding site" evidence="2">
    <location>
        <position position="155"/>
    </location>
    <ligand>
        <name>GTP</name>
        <dbReference type="ChEBI" id="CHEBI:37565"/>
    </ligand>
</feature>
<feature type="binding site" evidence="2">
    <location>
        <position position="156"/>
    </location>
    <ligand>
        <name>GTP</name>
        <dbReference type="ChEBI" id="CHEBI:37565"/>
    </ligand>
</feature>
<feature type="modified residue" description="N-acetylalanine" evidence="1">
    <location>
        <position position="2"/>
    </location>
</feature>
<feature type="modified residue" description="Cysteine methyl ester" evidence="1">
    <location>
        <position position="215"/>
    </location>
</feature>
<feature type="lipid moiety-binding region" description="S-geranylgeranyl cysteine" evidence="1">
    <location>
        <position position="213"/>
    </location>
</feature>
<feature type="lipid moiety-binding region" description="S-geranylgeranyl cysteine" evidence="1">
    <location>
        <position position="215"/>
    </location>
</feature>
<accession>Q5ZKU5</accession>